<dbReference type="EMBL" id="AY278321">
    <property type="protein sequence ID" value="AAP37014.1"/>
    <property type="molecule type" value="mRNA"/>
</dbReference>
<dbReference type="RefSeq" id="NP_852052.3">
    <property type="nucleotide sequence ID" value="NM_181387.4"/>
</dbReference>
<dbReference type="SMR" id="Q7TSY2"/>
<dbReference type="FunCoup" id="Q7TSY2">
    <property type="interactions" value="1242"/>
</dbReference>
<dbReference type="STRING" id="10116.ENSRNOP00000010347"/>
<dbReference type="PhosphoSitePlus" id="Q7TSY2"/>
<dbReference type="PaxDb" id="10116-ENSRNOP00000010347"/>
<dbReference type="GeneID" id="353230"/>
<dbReference type="KEGG" id="rno:353230"/>
<dbReference type="UCSC" id="RGD:727967">
    <property type="organism name" value="rat"/>
</dbReference>
<dbReference type="AGR" id="RGD:727967"/>
<dbReference type="CTD" id="375323"/>
<dbReference type="RGD" id="727967">
    <property type="gene designation" value="Lhfpl4"/>
</dbReference>
<dbReference type="eggNOG" id="KOG4026">
    <property type="taxonomic scope" value="Eukaryota"/>
</dbReference>
<dbReference type="HOGENOM" id="CLU_084868_1_2_1"/>
<dbReference type="InParanoid" id="Q7TSY2"/>
<dbReference type="OrthoDB" id="5873721at2759"/>
<dbReference type="PhylomeDB" id="Q7TSY2"/>
<dbReference type="TreeFam" id="TF321143"/>
<dbReference type="PRO" id="PR:Q7TSY2"/>
<dbReference type="Proteomes" id="UP000002494">
    <property type="component" value="Chromosome 4"/>
</dbReference>
<dbReference type="Bgee" id="ENSRNOG00000007727">
    <property type="expression patterns" value="Expressed in frontal cortex and 3 other cell types or tissues"/>
</dbReference>
<dbReference type="GO" id="GO:0030425">
    <property type="term" value="C:dendrite"/>
    <property type="evidence" value="ECO:0007669"/>
    <property type="project" value="UniProtKB-SubCell"/>
</dbReference>
<dbReference type="GO" id="GO:0098982">
    <property type="term" value="C:GABA-ergic synapse"/>
    <property type="evidence" value="ECO:0000266"/>
    <property type="project" value="RGD"/>
</dbReference>
<dbReference type="GO" id="GO:0060077">
    <property type="term" value="C:inhibitory synapse"/>
    <property type="evidence" value="ECO:0000314"/>
    <property type="project" value="UniProtKB"/>
</dbReference>
<dbReference type="GO" id="GO:0005886">
    <property type="term" value="C:plasma membrane"/>
    <property type="evidence" value="ECO:0000318"/>
    <property type="project" value="GO_Central"/>
</dbReference>
<dbReference type="GO" id="GO:0045211">
    <property type="term" value="C:postsynaptic membrane"/>
    <property type="evidence" value="ECO:0000250"/>
    <property type="project" value="UniProtKB"/>
</dbReference>
<dbReference type="GO" id="GO:0099572">
    <property type="term" value="C:postsynaptic specialization"/>
    <property type="evidence" value="ECO:0000266"/>
    <property type="project" value="RGD"/>
</dbReference>
<dbReference type="GO" id="GO:0050811">
    <property type="term" value="F:GABA receptor binding"/>
    <property type="evidence" value="ECO:0000314"/>
    <property type="project" value="UniProtKB"/>
</dbReference>
<dbReference type="GO" id="GO:0097112">
    <property type="term" value="P:gamma-aminobutyric acid receptor clustering"/>
    <property type="evidence" value="ECO:0000250"/>
    <property type="project" value="UniProtKB"/>
</dbReference>
<dbReference type="GO" id="GO:0099645">
    <property type="term" value="P:neurotransmitter receptor localization to postsynaptic specialization membrane"/>
    <property type="evidence" value="ECO:0000266"/>
    <property type="project" value="RGD"/>
</dbReference>
<dbReference type="GO" id="GO:1905702">
    <property type="term" value="P:regulation of inhibitory synapse assembly"/>
    <property type="evidence" value="ECO:0000250"/>
    <property type="project" value="UniProtKB"/>
</dbReference>
<dbReference type="GO" id="GO:0007605">
    <property type="term" value="P:sensory perception of sound"/>
    <property type="evidence" value="ECO:0000318"/>
    <property type="project" value="GO_Central"/>
</dbReference>
<dbReference type="FunFam" id="1.20.140.150:FF:000035">
    <property type="entry name" value="LHFPL tetraspan subfamily member 4 protein"/>
    <property type="match status" value="1"/>
</dbReference>
<dbReference type="InterPro" id="IPR019372">
    <property type="entry name" value="LHFPL"/>
</dbReference>
<dbReference type="PANTHER" id="PTHR12489:SF14">
    <property type="entry name" value="LHFPL TETRASPAN SUBFAMILY MEMBER 4 PROTEIN"/>
    <property type="match status" value="1"/>
</dbReference>
<dbReference type="PANTHER" id="PTHR12489">
    <property type="entry name" value="LIPOMA HMGIC FUSION PARTNER-LIKE PROTEIN"/>
    <property type="match status" value="1"/>
</dbReference>
<dbReference type="Pfam" id="PF10242">
    <property type="entry name" value="L_HMGIC_fpl"/>
    <property type="match status" value="1"/>
</dbReference>
<name>LHPL4_RAT</name>
<sequence length="247" mass="27050">MLPSQEASKLYHEHYMRNSRAIGVLWAIFTICFAIINVVVFIQPYWVGDSVSTPKPGYFGLFHYCVGSGLAGRELTCRGSFTDFSTIPSSAFKAAAFFVLLSMVLILGCITCFALFFFCNTATVYKICAWMQLLAALCLVLGCMIFPDGWDAETIRDMCGAKTGKYSLGDCSVRWAYILAIIGILNALILSFLAFVLGNRQTDLLQEELKQENKDFVGTTVSSVLRPGGDVSGWGVLPCPVAHTQGP</sequence>
<organism>
    <name type="scientific">Rattus norvegicus</name>
    <name type="common">Rat</name>
    <dbReference type="NCBI Taxonomy" id="10116"/>
    <lineage>
        <taxon>Eukaryota</taxon>
        <taxon>Metazoa</taxon>
        <taxon>Chordata</taxon>
        <taxon>Craniata</taxon>
        <taxon>Vertebrata</taxon>
        <taxon>Euteleostomi</taxon>
        <taxon>Mammalia</taxon>
        <taxon>Eutheria</taxon>
        <taxon>Euarchontoglires</taxon>
        <taxon>Glires</taxon>
        <taxon>Rodentia</taxon>
        <taxon>Myomorpha</taxon>
        <taxon>Muroidea</taxon>
        <taxon>Muridae</taxon>
        <taxon>Murinae</taxon>
        <taxon>Rattus</taxon>
    </lineage>
</organism>
<evidence type="ECO:0000250" key="1">
    <source>
        <dbReference type="UniProtKB" id="Q5U4E0"/>
    </source>
</evidence>
<evidence type="ECO:0000250" key="2">
    <source>
        <dbReference type="UniProtKB" id="Q7Z7J7"/>
    </source>
</evidence>
<evidence type="ECO:0000255" key="3"/>
<evidence type="ECO:0000269" key="4">
    <source>
    </source>
</evidence>
<evidence type="ECO:0000269" key="5">
    <source>
    </source>
</evidence>
<evidence type="ECO:0000269" key="6">
    <source>
    </source>
</evidence>
<evidence type="ECO:0000305" key="7"/>
<evidence type="ECO:0000312" key="8">
    <source>
        <dbReference type="RGD" id="727967"/>
    </source>
</evidence>
<keyword id="KW-1003">Cell membrane</keyword>
<keyword id="KW-0966">Cell projection</keyword>
<keyword id="KW-0472">Membrane</keyword>
<keyword id="KW-0628">Postsynaptic cell membrane</keyword>
<keyword id="KW-1185">Reference proteome</keyword>
<keyword id="KW-0770">Synapse</keyword>
<keyword id="KW-0812">Transmembrane</keyword>
<keyword id="KW-1133">Transmembrane helix</keyword>
<accession>Q7TSY2</accession>
<comment type="function">
    <text evidence="1">Plays a role in the regulation of inhibitory synapse formation and function by being involved in maintening gamma-aminobutyric acid receptors (GABAARs) clustering and their associated scaffold proteins at inhibitory synaptic sites. Acts in concert with NLGN2 to recruit or stabilize GABAARs.</text>
</comment>
<comment type="subunit">
    <text evidence="1 4">Interacts with GABA(A) receptor subunits (PubMed:28279354). Interacts with GABRB3 (By similarity). Interacts with GABRA2 (By similarity). Interacts with GABRG2 (By similarity). Interacts with GABRA1 (PubMed:28279354). Identified in a complex of 720 kDa composed of LHFPL4, NLGN2, GABRA1, GABRB2, GABRG2 and GABRB3 (PubMed:28279354). Interacts with NLGN2; leading to mutual regulation of protein level and synaptic clustering (By similarity).</text>
</comment>
<comment type="subcellular location">
    <subcellularLocation>
        <location evidence="5">Cell projection</location>
        <location evidence="5">Dendrite</location>
    </subcellularLocation>
    <subcellularLocation>
        <location evidence="5 6">Postsynaptic cell membrane</location>
        <topology evidence="3">Multi-pass membrane protein</topology>
    </subcellularLocation>
    <text evidence="5 6">Specifically localizes to inhibitory postsynaptic sites (PubMed:29742426). Colocalizes with GPHN, GABRG2 and NLGN2 at inhibitory postsynaptic sites (PubMed:28978485, PubMed:29742426).</text>
</comment>
<comment type="similarity">
    <text evidence="7">Belongs to the LHFP family.</text>
</comment>
<proteinExistence type="evidence at protein level"/>
<gene>
    <name evidence="8" type="primary">Lhfpl4</name>
</gene>
<feature type="chain" id="PRO_0000285963" description="LHFPL tetraspan subfamily member 4 protein">
    <location>
        <begin position="1"/>
        <end position="247"/>
    </location>
</feature>
<feature type="transmembrane region" description="Helical" evidence="3">
    <location>
        <begin position="22"/>
        <end position="42"/>
    </location>
</feature>
<feature type="transmembrane region" description="Helical" evidence="3">
    <location>
        <begin position="97"/>
        <end position="117"/>
    </location>
</feature>
<feature type="transmembrane region" description="Helical" evidence="3">
    <location>
        <begin position="127"/>
        <end position="147"/>
    </location>
</feature>
<feature type="transmembrane region" description="Helical" evidence="3">
    <location>
        <begin position="178"/>
        <end position="198"/>
    </location>
</feature>
<protein>
    <recommendedName>
        <fullName evidence="8">LHFPL tetraspan subfamily member 4 protein</fullName>
    </recommendedName>
    <alternativeName>
        <fullName evidence="2">Lipoma HMGIC fusion partner-like 4 protein</fullName>
    </alternativeName>
</protein>
<reference key="1">
    <citation type="submission" date="2003-04" db="EMBL/GenBank/DDBJ databases">
        <authorList>
            <person name="Huang C.Q."/>
            <person name="Wu S.L."/>
            <person name="Liu S."/>
        </authorList>
    </citation>
    <scope>NUCLEOTIDE SEQUENCE [LARGE SCALE MRNA]</scope>
</reference>
<reference key="2">
    <citation type="journal article" date="2017" name="Cell Rep.">
        <title>An essential role for the tetraspanin LHFPL4 in the cell-type-specific targeting and clustering of synaptic GABAA ceceptors.</title>
        <authorList>
            <person name="Davenport E.C."/>
            <person name="Pendolino V."/>
            <person name="Kontou G."/>
            <person name="McGee T.P."/>
            <person name="Sheehan D.F."/>
            <person name="Lopez-Domenech G."/>
            <person name="Farrant M."/>
            <person name="Kittler J.T."/>
        </authorList>
    </citation>
    <scope>SUBCELLULAR LOCATION</scope>
</reference>
<reference key="3">
    <citation type="journal article" date="2017" name="Neuron">
        <title>GARLH family proteins stabilize GABAA receptors at synapses.</title>
        <authorList>
            <person name="Yamasaki T."/>
            <person name="Hoyos-Ramirez E."/>
            <person name="Martenson J.S."/>
            <person name="Morimoto-Tomita M."/>
            <person name="Tomita S."/>
        </authorList>
    </citation>
    <scope>IDENTIFICATION BY MASS SPECTROMETRY</scope>
    <scope>IDENTIFICATION IN A COMPLEX WITH NLGN2; GABRA1; GABRB2; GABRG2 AND GABRB3</scope>
    <scope>INTERACTION WITH GABRA1</scope>
</reference>
<reference key="4">
    <citation type="journal article" date="2018" name="Cell Rep.">
        <title>Impairment of inhibitory synapse formation and motor behavior in mice lacking the NL2 binding partner LHFPL4/GARLH4.</title>
        <authorList>
            <person name="Wu M."/>
            <person name="Tian H.L."/>
            <person name="Liu X."/>
            <person name="Lai J.H.C."/>
            <person name="Du S."/>
            <person name="Xia J."/>
        </authorList>
    </citation>
    <scope>SUBCELLULAR LOCATION</scope>
</reference>